<reference key="1">
    <citation type="submission" date="2005-09" db="EMBL/GenBank/DDBJ databases">
        <authorList>
            <person name="Mural R.J."/>
            <person name="Adams M.D."/>
            <person name="Myers E.W."/>
            <person name="Smith H.O."/>
            <person name="Venter J.C."/>
        </authorList>
    </citation>
    <scope>NUCLEOTIDE SEQUENCE [LARGE SCALE GENOMIC DNA]</scope>
</reference>
<reference key="2">
    <citation type="journal article" date="2004" name="Genome Res.">
        <title>The status, quality, and expansion of the NIH full-length cDNA project: the Mammalian Gene Collection (MGC).</title>
        <authorList>
            <consortium name="The MGC Project Team"/>
        </authorList>
    </citation>
    <scope>NUCLEOTIDE SEQUENCE [LARGE SCALE MRNA]</scope>
    <source>
        <strain>FVB/N</strain>
        <tissue>Mammary tumor</tissue>
    </source>
</reference>
<reference key="3">
    <citation type="journal article" date="2015" name="Protein Cell">
        <title>Characterization of a novel mouse model with genetic deletion of CD177.</title>
        <authorList>
            <person name="Xie Q."/>
            <person name="Klesney-Tait J."/>
            <person name="Keck K."/>
            <person name="Parlet C."/>
            <person name="Borcherding N."/>
            <person name="Kolb R."/>
            <person name="Li W."/>
            <person name="Tygrett L."/>
            <person name="Waldschmidt T."/>
            <person name="Olivier A."/>
            <person name="Chen S."/>
            <person name="Liu G.H."/>
            <person name="Li X."/>
            <person name="Zhang W."/>
        </authorList>
    </citation>
    <scope>FUNCTION</scope>
    <scope>SUBCELLULAR LOCATION</scope>
    <scope>TISSUE SPECIFICITY</scope>
    <scope>DISRUPTION PHENOTYPE</scope>
</reference>
<evidence type="ECO:0000250" key="1">
    <source>
        <dbReference type="UniProtKB" id="Q8N6Q3"/>
    </source>
</evidence>
<evidence type="ECO:0000255" key="2"/>
<evidence type="ECO:0000269" key="3">
    <source>
    </source>
</evidence>
<evidence type="ECO:0000305" key="4"/>
<dbReference type="EMBL" id="CH466593">
    <property type="protein sequence ID" value="EDL24318.1"/>
    <property type="molecule type" value="Genomic_DNA"/>
</dbReference>
<dbReference type="EMBL" id="BC027283">
    <property type="protein sequence ID" value="AAH27283.1"/>
    <property type="molecule type" value="mRNA"/>
</dbReference>
<dbReference type="CCDS" id="CCDS20962.1"/>
<dbReference type="RefSeq" id="NP_081138.2">
    <property type="nucleotide sequence ID" value="NM_026862.3"/>
</dbReference>
<dbReference type="SMR" id="Q8R2S8"/>
<dbReference type="FunCoup" id="Q8R2S8">
    <property type="interactions" value="21"/>
</dbReference>
<dbReference type="STRING" id="10090.ENSMUSP00000064934"/>
<dbReference type="GlyCosmos" id="Q8R2S8">
    <property type="glycosylation" value="4 sites, No reported glycans"/>
</dbReference>
<dbReference type="GlyGen" id="Q8R2S8">
    <property type="glycosylation" value="6 sites, 1 O-linked glycan (1 site)"/>
</dbReference>
<dbReference type="PhosphoSitePlus" id="Q8R2S8"/>
<dbReference type="SwissPalm" id="Q8R2S8"/>
<dbReference type="PaxDb" id="10090-ENSMUSP00000064934"/>
<dbReference type="ProteomicsDB" id="265620"/>
<dbReference type="Antibodypedia" id="65021">
    <property type="antibodies" value="419 antibodies from 23 providers"/>
</dbReference>
<dbReference type="DNASU" id="68891"/>
<dbReference type="Ensembl" id="ENSMUST00000063956.7">
    <property type="protein sequence ID" value="ENSMUSP00000064934.6"/>
    <property type="gene ID" value="ENSMUSG00000052212.7"/>
</dbReference>
<dbReference type="GeneID" id="68891"/>
<dbReference type="KEGG" id="mmu:68891"/>
<dbReference type="UCSC" id="uc009fql.1">
    <property type="organism name" value="mouse"/>
</dbReference>
<dbReference type="AGR" id="MGI:1916141"/>
<dbReference type="CTD" id="57126"/>
<dbReference type="MGI" id="MGI:1916141">
    <property type="gene designation" value="Cd177"/>
</dbReference>
<dbReference type="VEuPathDB" id="HostDB:ENSMUSG00000052212"/>
<dbReference type="eggNOG" id="ENOG502ST5V">
    <property type="taxonomic scope" value="Eukaryota"/>
</dbReference>
<dbReference type="GeneTree" id="ENSGT00530000063351"/>
<dbReference type="HOGENOM" id="CLU_345789_0_0_1"/>
<dbReference type="InParanoid" id="Q8R2S8"/>
<dbReference type="OMA" id="NEECPVI"/>
<dbReference type="OrthoDB" id="9538399at2759"/>
<dbReference type="PhylomeDB" id="Q8R2S8"/>
<dbReference type="TreeFam" id="TF337286"/>
<dbReference type="Reactome" id="R-MMU-140875">
    <property type="pathway name" value="Common Pathway of Fibrin Clot Formation"/>
</dbReference>
<dbReference type="Reactome" id="R-MMU-202733">
    <property type="pathway name" value="Cell surface interactions at the vascular wall"/>
</dbReference>
<dbReference type="Reactome" id="R-MMU-6798695">
    <property type="pathway name" value="Neutrophil degranulation"/>
</dbReference>
<dbReference type="BioGRID-ORCS" id="68891">
    <property type="hits" value="3 hits in 76 CRISPR screens"/>
</dbReference>
<dbReference type="ChiTaRS" id="Cd177">
    <property type="organism name" value="mouse"/>
</dbReference>
<dbReference type="PRO" id="PR:Q8R2S8"/>
<dbReference type="Proteomes" id="UP000000589">
    <property type="component" value="Chromosome 7"/>
</dbReference>
<dbReference type="RNAct" id="Q8R2S8">
    <property type="molecule type" value="protein"/>
</dbReference>
<dbReference type="Bgee" id="ENSMUSG00000052212">
    <property type="expression patterns" value="Expressed in granulocyte and 51 other cell types or tissues"/>
</dbReference>
<dbReference type="GO" id="GO:0005886">
    <property type="term" value="C:plasma membrane"/>
    <property type="evidence" value="ECO:0007669"/>
    <property type="project" value="UniProtKB-SubCell"/>
</dbReference>
<dbReference type="GO" id="GO:0007155">
    <property type="term" value="P:cell adhesion"/>
    <property type="evidence" value="ECO:0007669"/>
    <property type="project" value="UniProtKB-KW"/>
</dbReference>
<dbReference type="GO" id="GO:0045087">
    <property type="term" value="P:innate immune response"/>
    <property type="evidence" value="ECO:0007669"/>
    <property type="project" value="UniProtKB-KW"/>
</dbReference>
<dbReference type="CDD" id="cd23623">
    <property type="entry name" value="TFP_LU_ECD_CD177_rpt1"/>
    <property type="match status" value="3"/>
</dbReference>
<dbReference type="CDD" id="cd23636">
    <property type="entry name" value="TFP_LU_ECD_CD177_rpt2"/>
    <property type="match status" value="3"/>
</dbReference>
<dbReference type="CDD" id="cd23624">
    <property type="entry name" value="TFP_LU_ECD_CD177_rpt3"/>
    <property type="match status" value="1"/>
</dbReference>
<dbReference type="CDD" id="cd23637">
    <property type="entry name" value="TFP_LU_ECD_CD177_rpt4"/>
    <property type="match status" value="1"/>
</dbReference>
<dbReference type="InterPro" id="IPR051899">
    <property type="entry name" value="Fert-Immune_med_protein"/>
</dbReference>
<dbReference type="InterPro" id="IPR016054">
    <property type="entry name" value="LY6_UPA_recep-like"/>
</dbReference>
<dbReference type="InterPro" id="IPR045860">
    <property type="entry name" value="Snake_toxin-like_sf"/>
</dbReference>
<dbReference type="PANTHER" id="PTHR16529">
    <property type="entry name" value="CD177 ANTIGEN"/>
    <property type="match status" value="1"/>
</dbReference>
<dbReference type="PANTHER" id="PTHR16529:SF8">
    <property type="entry name" value="CD177 ANTIGEN"/>
    <property type="match status" value="1"/>
</dbReference>
<dbReference type="Pfam" id="PF00021">
    <property type="entry name" value="UPAR_LY6"/>
    <property type="match status" value="7"/>
</dbReference>
<dbReference type="SUPFAM" id="SSF57302">
    <property type="entry name" value="Snake toxin-like"/>
    <property type="match status" value="3"/>
</dbReference>
<gene>
    <name type="primary">Cd177</name>
</gene>
<proteinExistence type="evidence at transcript level"/>
<sequence>MNSIPVLTLLGVTALLPCVPALTCQKSSAQAVRNVAELPLRWWGAGEKTCEVSEGCQDLIMLLYNGPKVNLVIIKGCTEVEDQEPKVIWLRTGPGLSVVSYTRVCRHGDLCNDVNSTKILEELPTPTVPGSLRCPLCLSNDSCENAPEQVCPVGSTHCYDGVLRLRGDGIRTNLKVQGCMAQPDCNLLNGTQAIGTLYMSENCDLIGPQALDCNSGSLETVRNVSDLHLSWTTGWQTCEAGEGCYETVMLIQNGHEFHMVLTKGCTRDMNKKARLTRHRTGPGISIVSYVHVCRDRDFCNDLSTTDPLWTPPPDTELGTLRCRHCLSTGSCVSASELVCPAGSTHCYSGVLSLRGGGVISDLKVQGCISQSQPGCNLLNGTQTIGPVDVREDCGLQLDALKCQHGTLKTIQDISKLPLQWTAGQKICNVGEGCQDTLMLIENGEQVNLVLTKGCTTAKDQEAKVTEHRTGPGLSVTSYTRVCRKKDFCNDLSTTAPLWAPPPVTAPGTTRCPLCFSEQACENAPEQVCPAGSTHCYSGVLSLRGGGIISDLKVQGCMSQPGCNLLNGTQTIGPVDVSERCSPPSETTELSCYRGVMFELGNGFAEEPVKWTAPGSQVCAPDEICQETLLLIDVGQKSAFLGSKGCSSPGAQDNIGVSIFSRLPGMLVASYTKFCSSHLCNGADSSSVLLSILPRPDVPPPGDVQCPMCVELFGSCKSTDSVTCPRGATHCYKGDIALQGGGLTTRVSIQGCMAPPIKPLLGDSKTIGIFSAEESSNYRHEDDVTSAPSLAWTLRLSAWMLGLSALLSSLYAGICPLC</sequence>
<protein>
    <recommendedName>
        <fullName>CD177 antigen</fullName>
    </recommendedName>
    <cdAntigenName>CD177</cdAntigenName>
</protein>
<feature type="signal peptide" evidence="2">
    <location>
        <begin position="1"/>
        <end position="21"/>
    </location>
</feature>
<feature type="chain" id="PRO_0000378449" description="CD177 antigen">
    <location>
        <begin position="22"/>
        <end position="817"/>
    </location>
</feature>
<feature type="topological domain" description="Extracellular" evidence="4">
    <location>
        <begin position="22"/>
        <end position="796"/>
    </location>
</feature>
<feature type="transmembrane region" description="Helical; Anchor for type IV membrane protein" evidence="2">
    <location>
        <begin position="797"/>
        <end position="817"/>
    </location>
</feature>
<feature type="domain" description="UPAR/Ly6 1">
    <location>
        <begin position="134"/>
        <end position="203"/>
    </location>
</feature>
<feature type="domain" description="UPAR/Ly6 2">
    <location>
        <begin position="322"/>
        <end position="393"/>
    </location>
</feature>
<feature type="domain" description="UPAR/Ly6 3">
    <location>
        <begin position="511"/>
        <end position="581"/>
    </location>
</feature>
<feature type="domain" description="UPAR/Ly6 4">
    <location>
        <begin position="705"/>
        <end position="774"/>
    </location>
</feature>
<feature type="glycosylation site" description="N-linked (GlcNAc...) asparagine" evidence="2">
    <location>
        <position position="115"/>
    </location>
</feature>
<feature type="glycosylation site" description="N-linked (GlcNAc...) asparagine" evidence="2">
    <location>
        <position position="189"/>
    </location>
</feature>
<feature type="glycosylation site" description="N-linked (GlcNAc...) asparagine" evidence="2">
    <location>
        <position position="379"/>
    </location>
</feature>
<feature type="glycosylation site" description="N-linked (GlcNAc...) asparagine" evidence="2">
    <location>
        <position position="566"/>
    </location>
</feature>
<comment type="function">
    <text evidence="1 3">In association with beta-2 integrin heterodimer ITGAM/CD11b and ITGB2/CD18, mediates activation of TNF-alpha primed neutrophils including degranulation and superoxide production (By similarity). In addition, by preventing beta-2 integrin internalization and attenuating chemokine signaling favors adhesion over migration (By similarity). Heterophilic interaction with PECAM1 on endothelial cells plays a role in neutrophil transendothelial migration in vitro (By similarity). However, appears to be dispensable for neutrophil recruitment caused by bacterial infection in vivo (PubMed:25359465). Acts as a receptor for the mature form of protease PRTN3 allowing its display at the cell surface of neutrophils (By similarity). By displaying PRTN3 at the neutrophil cell surface, may play a role in enhancing endothelial cell junctional integrity and thus vascular integrity during neutrophil diapedesis (By similarity).</text>
</comment>
<comment type="subunit">
    <text evidence="1">Found in a complex with integrin ITGAM/CD11b and ITGB2/CD18. Interacts with PECAM1 (via Ig-like C2-type domain 6); the interaction is Ca(2+)-dependent; the interaction is direct. Interacts with serine protease PRTN3/myeloblastin; the interaction tethers PRTN3 to the cell surface; the interaction is direct.</text>
</comment>
<comment type="subcellular location">
    <subcellularLocation>
        <location evidence="3">Cell membrane</location>
        <topology evidence="4">Single-pass type IV membrane protein</topology>
    </subcellularLocation>
</comment>
<comment type="tissue specificity">
    <text evidence="3">Expressed in neutrophils.</text>
</comment>
<comment type="disruption phenotype">
    <text evidence="3">Mice are viable, fertile and are born at the expected Mendelian rate. Slight decrease in blood CD11b(+)Ly-6G(-)Ly-6C(+) monocyte and CD11b(+)Ly-6G(+)Ly-6C(+) neutrophil populations. Lymphocyte and myeloid development is not affected. In S.aureus-mediated skin infection, recruitment of neutrophils and monocytes to the infection site is transiently reduced. In thioglycolate-induced peritonitis, recruitment of neutrophils is normal.</text>
</comment>
<organism>
    <name type="scientific">Mus musculus</name>
    <name type="common">Mouse</name>
    <dbReference type="NCBI Taxonomy" id="10090"/>
    <lineage>
        <taxon>Eukaryota</taxon>
        <taxon>Metazoa</taxon>
        <taxon>Chordata</taxon>
        <taxon>Craniata</taxon>
        <taxon>Vertebrata</taxon>
        <taxon>Euteleostomi</taxon>
        <taxon>Mammalia</taxon>
        <taxon>Eutheria</taxon>
        <taxon>Euarchontoglires</taxon>
        <taxon>Glires</taxon>
        <taxon>Rodentia</taxon>
        <taxon>Myomorpha</taxon>
        <taxon>Muroidea</taxon>
        <taxon>Muridae</taxon>
        <taxon>Murinae</taxon>
        <taxon>Mus</taxon>
        <taxon>Mus</taxon>
    </lineage>
</organism>
<name>CD177_MOUSE</name>
<accession>Q8R2S8</accession>
<keyword id="KW-0130">Cell adhesion</keyword>
<keyword id="KW-1003">Cell membrane</keyword>
<keyword id="KW-0325">Glycoprotein</keyword>
<keyword id="KW-0391">Immunity</keyword>
<keyword id="KW-0399">Innate immunity</keyword>
<keyword id="KW-0472">Membrane</keyword>
<keyword id="KW-1185">Reference proteome</keyword>
<keyword id="KW-0677">Repeat</keyword>
<keyword id="KW-0732">Signal</keyword>
<keyword id="KW-0812">Transmembrane</keyword>
<keyword id="KW-1133">Transmembrane helix</keyword>